<reference key="1">
    <citation type="journal article" date="2008" name="J. Biotechnol.">
        <title>The genome of Xanthomonas campestris pv. campestris B100 and its use for the reconstruction of metabolic pathways involved in xanthan biosynthesis.</title>
        <authorList>
            <person name="Vorhoelter F.-J."/>
            <person name="Schneiker S."/>
            <person name="Goesmann A."/>
            <person name="Krause L."/>
            <person name="Bekel T."/>
            <person name="Kaiser O."/>
            <person name="Linke B."/>
            <person name="Patschkowski T."/>
            <person name="Rueckert C."/>
            <person name="Schmid J."/>
            <person name="Sidhu V.K."/>
            <person name="Sieber V."/>
            <person name="Tauch A."/>
            <person name="Watt S.A."/>
            <person name="Weisshaar B."/>
            <person name="Becker A."/>
            <person name="Niehaus K."/>
            <person name="Puehler A."/>
        </authorList>
    </citation>
    <scope>NUCLEOTIDE SEQUENCE [LARGE SCALE GENOMIC DNA]</scope>
    <source>
        <strain>B100</strain>
    </source>
</reference>
<protein>
    <recommendedName>
        <fullName evidence="1">Phosphoribosylformylglycinamidine cyclo-ligase</fullName>
        <ecNumber evidence="1">6.3.3.1</ecNumber>
    </recommendedName>
    <alternativeName>
        <fullName evidence="1">AIR synthase</fullName>
    </alternativeName>
    <alternativeName>
        <fullName evidence="1">AIRS</fullName>
    </alternativeName>
    <alternativeName>
        <fullName evidence="1">Phosphoribosyl-aminoimidazole synthetase</fullName>
    </alternativeName>
</protein>
<name>PUR5_XANCB</name>
<evidence type="ECO:0000255" key="1">
    <source>
        <dbReference type="HAMAP-Rule" id="MF_00741"/>
    </source>
</evidence>
<dbReference type="EC" id="6.3.3.1" evidence="1"/>
<dbReference type="EMBL" id="AM920689">
    <property type="protein sequence ID" value="CAP50721.1"/>
    <property type="molecule type" value="Genomic_DNA"/>
</dbReference>
<dbReference type="SMR" id="B0RQI6"/>
<dbReference type="KEGG" id="xca:xcc-b100_1371"/>
<dbReference type="HOGENOM" id="CLU_047116_0_0_6"/>
<dbReference type="UniPathway" id="UPA00074">
    <property type="reaction ID" value="UER00129"/>
</dbReference>
<dbReference type="Proteomes" id="UP000001188">
    <property type="component" value="Chromosome"/>
</dbReference>
<dbReference type="GO" id="GO:0005829">
    <property type="term" value="C:cytosol"/>
    <property type="evidence" value="ECO:0007669"/>
    <property type="project" value="TreeGrafter"/>
</dbReference>
<dbReference type="GO" id="GO:0005524">
    <property type="term" value="F:ATP binding"/>
    <property type="evidence" value="ECO:0007669"/>
    <property type="project" value="UniProtKB-KW"/>
</dbReference>
<dbReference type="GO" id="GO:0004637">
    <property type="term" value="F:phosphoribosylamine-glycine ligase activity"/>
    <property type="evidence" value="ECO:0007669"/>
    <property type="project" value="TreeGrafter"/>
</dbReference>
<dbReference type="GO" id="GO:0004641">
    <property type="term" value="F:phosphoribosylformylglycinamidine cyclo-ligase activity"/>
    <property type="evidence" value="ECO:0007669"/>
    <property type="project" value="UniProtKB-UniRule"/>
</dbReference>
<dbReference type="GO" id="GO:0006189">
    <property type="term" value="P:'de novo' IMP biosynthetic process"/>
    <property type="evidence" value="ECO:0007669"/>
    <property type="project" value="UniProtKB-UniRule"/>
</dbReference>
<dbReference type="GO" id="GO:0046084">
    <property type="term" value="P:adenine biosynthetic process"/>
    <property type="evidence" value="ECO:0007669"/>
    <property type="project" value="TreeGrafter"/>
</dbReference>
<dbReference type="CDD" id="cd02196">
    <property type="entry name" value="PurM"/>
    <property type="match status" value="1"/>
</dbReference>
<dbReference type="FunFam" id="3.30.1330.10:FF:000001">
    <property type="entry name" value="Phosphoribosylformylglycinamidine cyclo-ligase"/>
    <property type="match status" value="1"/>
</dbReference>
<dbReference type="FunFam" id="3.90.650.10:FF:000001">
    <property type="entry name" value="Phosphoribosylformylglycinamidine cyclo-ligase"/>
    <property type="match status" value="1"/>
</dbReference>
<dbReference type="Gene3D" id="3.90.650.10">
    <property type="entry name" value="PurM-like C-terminal domain"/>
    <property type="match status" value="1"/>
</dbReference>
<dbReference type="Gene3D" id="3.30.1330.10">
    <property type="entry name" value="PurM-like, N-terminal domain"/>
    <property type="match status" value="1"/>
</dbReference>
<dbReference type="HAMAP" id="MF_00741">
    <property type="entry name" value="AIRS"/>
    <property type="match status" value="1"/>
</dbReference>
<dbReference type="InterPro" id="IPR010918">
    <property type="entry name" value="PurM-like_C_dom"/>
</dbReference>
<dbReference type="InterPro" id="IPR036676">
    <property type="entry name" value="PurM-like_C_sf"/>
</dbReference>
<dbReference type="InterPro" id="IPR016188">
    <property type="entry name" value="PurM-like_N"/>
</dbReference>
<dbReference type="InterPro" id="IPR036921">
    <property type="entry name" value="PurM-like_N_sf"/>
</dbReference>
<dbReference type="InterPro" id="IPR004733">
    <property type="entry name" value="PurM_cligase"/>
</dbReference>
<dbReference type="NCBIfam" id="TIGR00878">
    <property type="entry name" value="purM"/>
    <property type="match status" value="1"/>
</dbReference>
<dbReference type="PANTHER" id="PTHR10520:SF12">
    <property type="entry name" value="TRIFUNCTIONAL PURINE BIOSYNTHETIC PROTEIN ADENOSINE-3"/>
    <property type="match status" value="1"/>
</dbReference>
<dbReference type="PANTHER" id="PTHR10520">
    <property type="entry name" value="TRIFUNCTIONAL PURINE BIOSYNTHETIC PROTEIN ADENOSINE-3-RELATED"/>
    <property type="match status" value="1"/>
</dbReference>
<dbReference type="Pfam" id="PF00586">
    <property type="entry name" value="AIRS"/>
    <property type="match status" value="1"/>
</dbReference>
<dbReference type="Pfam" id="PF02769">
    <property type="entry name" value="AIRS_C"/>
    <property type="match status" value="1"/>
</dbReference>
<dbReference type="SUPFAM" id="SSF56042">
    <property type="entry name" value="PurM C-terminal domain-like"/>
    <property type="match status" value="1"/>
</dbReference>
<dbReference type="SUPFAM" id="SSF55326">
    <property type="entry name" value="PurM N-terminal domain-like"/>
    <property type="match status" value="1"/>
</dbReference>
<gene>
    <name evidence="1" type="primary">purM</name>
    <name type="ordered locus">xcc-b100_1371</name>
</gene>
<proteinExistence type="inferred from homology"/>
<keyword id="KW-0067">ATP-binding</keyword>
<keyword id="KW-0963">Cytoplasm</keyword>
<keyword id="KW-0436">Ligase</keyword>
<keyword id="KW-0547">Nucleotide-binding</keyword>
<keyword id="KW-0658">Purine biosynthesis</keyword>
<accession>B0RQI6</accession>
<feature type="chain" id="PRO_1000193056" description="Phosphoribosylformylglycinamidine cyclo-ligase">
    <location>
        <begin position="1"/>
        <end position="341"/>
    </location>
</feature>
<comment type="catalytic activity">
    <reaction evidence="1">
        <text>2-formamido-N(1)-(5-O-phospho-beta-D-ribosyl)acetamidine + ATP = 5-amino-1-(5-phospho-beta-D-ribosyl)imidazole + ADP + phosphate + H(+)</text>
        <dbReference type="Rhea" id="RHEA:23032"/>
        <dbReference type="ChEBI" id="CHEBI:15378"/>
        <dbReference type="ChEBI" id="CHEBI:30616"/>
        <dbReference type="ChEBI" id="CHEBI:43474"/>
        <dbReference type="ChEBI" id="CHEBI:137981"/>
        <dbReference type="ChEBI" id="CHEBI:147287"/>
        <dbReference type="ChEBI" id="CHEBI:456216"/>
        <dbReference type="EC" id="6.3.3.1"/>
    </reaction>
</comment>
<comment type="pathway">
    <text evidence="1">Purine metabolism; IMP biosynthesis via de novo pathway; 5-amino-1-(5-phospho-D-ribosyl)imidazole from N(2)-formyl-N(1)-(5-phospho-D-ribosyl)glycinamide: step 2/2.</text>
</comment>
<comment type="subcellular location">
    <subcellularLocation>
        <location evidence="1">Cytoplasm</location>
    </subcellularLocation>
</comment>
<comment type="similarity">
    <text evidence="1">Belongs to the AIR synthase family.</text>
</comment>
<organism>
    <name type="scientific">Xanthomonas campestris pv. campestris (strain B100)</name>
    <dbReference type="NCBI Taxonomy" id="509169"/>
    <lineage>
        <taxon>Bacteria</taxon>
        <taxon>Pseudomonadati</taxon>
        <taxon>Pseudomonadota</taxon>
        <taxon>Gammaproteobacteria</taxon>
        <taxon>Lysobacterales</taxon>
        <taxon>Lysobacteraceae</taxon>
        <taxon>Xanthomonas</taxon>
    </lineage>
</organism>
<sequence>MTYRDAGVDIDAGNALVERIKPLVKRSFRPEVMGGLGGFGALFDLSGKYKEPVLVSGTDGVGTKLKLAQQLGRHDTIGIDLVGMCVNDVLVQGAEPLFFLDYFATGKLDIDTAAAVVGGIARGCELSGCALIGGETAEMPDMYPPGEYDLAGFTVGAVEKSQLLDGAQVREGDVLIGIASSGPHSNGYSLIRKIYERAGAPADLVLDDGVALIDALMAPTALYVKPILALLKSHGEAIHAMAHVTGGGLTENIIRVIPDGLGLDIDATAWILPPVFAWLQREGAVADAEMWRTFNCGIGFVLVAAPAQAAALEQALDAQSLAHWRIGQVVTAQGDERVRIG</sequence>